<sequence length="335" mass="35204">MKRIAVLTSGGDAPGMNAAIRAVVRQAISEGMEVFGIYDGYAGMVAGEIHPLDAASVGDIISRGGTFLHSARYPEFAQLEGQLKGIEQLKKHGIEGVVVIGGDGSYHGAMRLTEHGFPAIGLPGTIDNDIVGTDFTIGFDTAVTTAMDAIDKIRDTSSSHRRTFVIEVMGRNAGDIALWAGIATGADEIIIPEAGFKMEDIVASIKAGYECGKKHNIIVLAEGVMSAAEFGQKLKEAGDTSDLRVTELGHIQRGGSPTARDRVLASRMGTHAVKLLKEGIGGVAVGIRNEKMVENPILGTAEEGALFSLTAEGKIVVNNPHKADIELSSLNKSLS</sequence>
<organism>
    <name type="scientific">Streptococcus pneumoniae (strain CGSP14)</name>
    <dbReference type="NCBI Taxonomy" id="516950"/>
    <lineage>
        <taxon>Bacteria</taxon>
        <taxon>Bacillati</taxon>
        <taxon>Bacillota</taxon>
        <taxon>Bacilli</taxon>
        <taxon>Lactobacillales</taxon>
        <taxon>Streptococcaceae</taxon>
        <taxon>Streptococcus</taxon>
    </lineage>
</organism>
<proteinExistence type="inferred from homology"/>
<dbReference type="EC" id="2.7.1.11" evidence="1"/>
<dbReference type="EMBL" id="CP001033">
    <property type="protein sequence ID" value="ACB90124.1"/>
    <property type="molecule type" value="Genomic_DNA"/>
</dbReference>
<dbReference type="RefSeq" id="WP_000820854.1">
    <property type="nucleotide sequence ID" value="NC_010582.1"/>
</dbReference>
<dbReference type="SMR" id="B2IP53"/>
<dbReference type="KEGG" id="spw:SPCG_0872"/>
<dbReference type="HOGENOM" id="CLU_020655_0_1_9"/>
<dbReference type="UniPathway" id="UPA00109">
    <property type="reaction ID" value="UER00182"/>
</dbReference>
<dbReference type="GO" id="GO:0005945">
    <property type="term" value="C:6-phosphofructokinase complex"/>
    <property type="evidence" value="ECO:0007669"/>
    <property type="project" value="TreeGrafter"/>
</dbReference>
<dbReference type="GO" id="GO:0003872">
    <property type="term" value="F:6-phosphofructokinase activity"/>
    <property type="evidence" value="ECO:0007669"/>
    <property type="project" value="UniProtKB-UniRule"/>
</dbReference>
<dbReference type="GO" id="GO:0016208">
    <property type="term" value="F:AMP binding"/>
    <property type="evidence" value="ECO:0007669"/>
    <property type="project" value="TreeGrafter"/>
</dbReference>
<dbReference type="GO" id="GO:0005524">
    <property type="term" value="F:ATP binding"/>
    <property type="evidence" value="ECO:0007669"/>
    <property type="project" value="UniProtKB-KW"/>
</dbReference>
<dbReference type="GO" id="GO:0070095">
    <property type="term" value="F:fructose-6-phosphate binding"/>
    <property type="evidence" value="ECO:0007669"/>
    <property type="project" value="TreeGrafter"/>
</dbReference>
<dbReference type="GO" id="GO:0042802">
    <property type="term" value="F:identical protein binding"/>
    <property type="evidence" value="ECO:0007669"/>
    <property type="project" value="TreeGrafter"/>
</dbReference>
<dbReference type="GO" id="GO:0046872">
    <property type="term" value="F:metal ion binding"/>
    <property type="evidence" value="ECO:0007669"/>
    <property type="project" value="UniProtKB-KW"/>
</dbReference>
<dbReference type="GO" id="GO:0048029">
    <property type="term" value="F:monosaccharide binding"/>
    <property type="evidence" value="ECO:0007669"/>
    <property type="project" value="TreeGrafter"/>
</dbReference>
<dbReference type="GO" id="GO:0061621">
    <property type="term" value="P:canonical glycolysis"/>
    <property type="evidence" value="ECO:0007669"/>
    <property type="project" value="TreeGrafter"/>
</dbReference>
<dbReference type="GO" id="GO:0030388">
    <property type="term" value="P:fructose 1,6-bisphosphate metabolic process"/>
    <property type="evidence" value="ECO:0007669"/>
    <property type="project" value="TreeGrafter"/>
</dbReference>
<dbReference type="GO" id="GO:0006002">
    <property type="term" value="P:fructose 6-phosphate metabolic process"/>
    <property type="evidence" value="ECO:0007669"/>
    <property type="project" value="InterPro"/>
</dbReference>
<dbReference type="CDD" id="cd00763">
    <property type="entry name" value="Bacterial_PFK"/>
    <property type="match status" value="1"/>
</dbReference>
<dbReference type="FunFam" id="3.40.50.450:FF:000001">
    <property type="entry name" value="ATP-dependent 6-phosphofructokinase"/>
    <property type="match status" value="1"/>
</dbReference>
<dbReference type="FunFam" id="3.40.50.460:FF:000002">
    <property type="entry name" value="ATP-dependent 6-phosphofructokinase"/>
    <property type="match status" value="1"/>
</dbReference>
<dbReference type="Gene3D" id="3.40.50.450">
    <property type="match status" value="1"/>
</dbReference>
<dbReference type="Gene3D" id="3.40.50.460">
    <property type="entry name" value="Phosphofructokinase domain"/>
    <property type="match status" value="1"/>
</dbReference>
<dbReference type="HAMAP" id="MF_00339">
    <property type="entry name" value="Phosphofructokinase_I_B1"/>
    <property type="match status" value="1"/>
</dbReference>
<dbReference type="InterPro" id="IPR022953">
    <property type="entry name" value="ATP_PFK"/>
</dbReference>
<dbReference type="InterPro" id="IPR012003">
    <property type="entry name" value="ATP_PFK_prok-type"/>
</dbReference>
<dbReference type="InterPro" id="IPR012828">
    <property type="entry name" value="PFKA_ATP_prok"/>
</dbReference>
<dbReference type="InterPro" id="IPR015912">
    <property type="entry name" value="Phosphofructokinase_CS"/>
</dbReference>
<dbReference type="InterPro" id="IPR000023">
    <property type="entry name" value="Phosphofructokinase_dom"/>
</dbReference>
<dbReference type="InterPro" id="IPR035966">
    <property type="entry name" value="PKF_sf"/>
</dbReference>
<dbReference type="NCBIfam" id="TIGR02482">
    <property type="entry name" value="PFKA_ATP"/>
    <property type="match status" value="1"/>
</dbReference>
<dbReference type="NCBIfam" id="NF002872">
    <property type="entry name" value="PRK03202.1"/>
    <property type="match status" value="1"/>
</dbReference>
<dbReference type="PANTHER" id="PTHR13697:SF4">
    <property type="entry name" value="ATP-DEPENDENT 6-PHOSPHOFRUCTOKINASE"/>
    <property type="match status" value="1"/>
</dbReference>
<dbReference type="PANTHER" id="PTHR13697">
    <property type="entry name" value="PHOSPHOFRUCTOKINASE"/>
    <property type="match status" value="1"/>
</dbReference>
<dbReference type="Pfam" id="PF00365">
    <property type="entry name" value="PFK"/>
    <property type="match status" value="1"/>
</dbReference>
<dbReference type="PIRSF" id="PIRSF000532">
    <property type="entry name" value="ATP_PFK_prok"/>
    <property type="match status" value="1"/>
</dbReference>
<dbReference type="PRINTS" id="PR00476">
    <property type="entry name" value="PHFRCTKINASE"/>
</dbReference>
<dbReference type="SUPFAM" id="SSF53784">
    <property type="entry name" value="Phosphofructokinase"/>
    <property type="match status" value="1"/>
</dbReference>
<dbReference type="PROSITE" id="PS00433">
    <property type="entry name" value="PHOSPHOFRUCTOKINASE"/>
    <property type="match status" value="1"/>
</dbReference>
<protein>
    <recommendedName>
        <fullName evidence="1">ATP-dependent 6-phosphofructokinase</fullName>
        <shortName evidence="1">ATP-PFK</shortName>
        <shortName evidence="1">Phosphofructokinase</shortName>
        <ecNumber evidence="1">2.7.1.11</ecNumber>
    </recommendedName>
    <alternativeName>
        <fullName evidence="1">Phosphohexokinase</fullName>
    </alternativeName>
</protein>
<feature type="chain" id="PRO_1000120062" description="ATP-dependent 6-phosphofructokinase">
    <location>
        <begin position="1"/>
        <end position="335"/>
    </location>
</feature>
<feature type="active site" description="Proton acceptor" evidence="1">
    <location>
        <position position="127"/>
    </location>
</feature>
<feature type="binding site" evidence="1">
    <location>
        <position position="11"/>
    </location>
    <ligand>
        <name>ATP</name>
        <dbReference type="ChEBI" id="CHEBI:30616"/>
    </ligand>
</feature>
<feature type="binding site" evidence="1">
    <location>
        <begin position="21"/>
        <end position="25"/>
    </location>
    <ligand>
        <name>ADP</name>
        <dbReference type="ChEBI" id="CHEBI:456216"/>
        <note>allosteric activator; ligand shared between dimeric partners</note>
    </ligand>
</feature>
<feature type="binding site" evidence="1">
    <location>
        <begin position="72"/>
        <end position="73"/>
    </location>
    <ligand>
        <name>ATP</name>
        <dbReference type="ChEBI" id="CHEBI:30616"/>
    </ligand>
</feature>
<feature type="binding site" evidence="1">
    <location>
        <begin position="102"/>
        <end position="105"/>
    </location>
    <ligand>
        <name>ATP</name>
        <dbReference type="ChEBI" id="CHEBI:30616"/>
    </ligand>
</feature>
<feature type="binding site" evidence="1">
    <location>
        <position position="103"/>
    </location>
    <ligand>
        <name>Mg(2+)</name>
        <dbReference type="ChEBI" id="CHEBI:18420"/>
        <note>catalytic</note>
    </ligand>
</feature>
<feature type="binding site" description="in other chain" evidence="1">
    <location>
        <begin position="125"/>
        <end position="127"/>
    </location>
    <ligand>
        <name>substrate</name>
        <note>ligand shared between dimeric partners</note>
    </ligand>
</feature>
<feature type="binding site" description="in other chain" evidence="1">
    <location>
        <position position="154"/>
    </location>
    <ligand>
        <name>ADP</name>
        <dbReference type="ChEBI" id="CHEBI:456216"/>
        <note>allosteric activator; ligand shared between dimeric partners</note>
    </ligand>
</feature>
<feature type="binding site" evidence="1">
    <location>
        <position position="162"/>
    </location>
    <ligand>
        <name>substrate</name>
        <note>ligand shared between dimeric partners</note>
    </ligand>
</feature>
<feature type="binding site" description="in other chain" evidence="1">
    <location>
        <begin position="169"/>
        <end position="171"/>
    </location>
    <ligand>
        <name>substrate</name>
        <note>ligand shared between dimeric partners</note>
    </ligand>
</feature>
<feature type="binding site" description="in other chain" evidence="1">
    <location>
        <begin position="185"/>
        <end position="187"/>
    </location>
    <ligand>
        <name>ADP</name>
        <dbReference type="ChEBI" id="CHEBI:456216"/>
        <note>allosteric activator; ligand shared between dimeric partners</note>
    </ligand>
</feature>
<feature type="binding site" description="in other chain" evidence="1">
    <location>
        <begin position="213"/>
        <end position="215"/>
    </location>
    <ligand>
        <name>ADP</name>
        <dbReference type="ChEBI" id="CHEBI:456216"/>
        <note>allosteric activator; ligand shared between dimeric partners</note>
    </ligand>
</feature>
<feature type="binding site" description="in other chain" evidence="1">
    <location>
        <position position="222"/>
    </location>
    <ligand>
        <name>substrate</name>
        <note>ligand shared between dimeric partners</note>
    </ligand>
</feature>
<feature type="binding site" evidence="1">
    <location>
        <position position="244"/>
    </location>
    <ligand>
        <name>substrate</name>
        <note>ligand shared between dimeric partners</note>
    </ligand>
</feature>
<feature type="binding site" description="in other chain" evidence="1">
    <location>
        <begin position="250"/>
        <end position="253"/>
    </location>
    <ligand>
        <name>substrate</name>
        <note>ligand shared between dimeric partners</note>
    </ligand>
</feature>
<name>PFKA_STRPS</name>
<keyword id="KW-0021">Allosteric enzyme</keyword>
<keyword id="KW-0067">ATP-binding</keyword>
<keyword id="KW-0963">Cytoplasm</keyword>
<keyword id="KW-0324">Glycolysis</keyword>
<keyword id="KW-0418">Kinase</keyword>
<keyword id="KW-0460">Magnesium</keyword>
<keyword id="KW-0479">Metal-binding</keyword>
<keyword id="KW-0547">Nucleotide-binding</keyword>
<keyword id="KW-0808">Transferase</keyword>
<gene>
    <name evidence="1" type="primary">pfkA</name>
    <name type="ordered locus">SPCG_0872</name>
</gene>
<reference key="1">
    <citation type="journal article" date="2009" name="BMC Genomics">
        <title>Genome evolution driven by host adaptations results in a more virulent and antimicrobial-resistant Streptococcus pneumoniae serotype 14.</title>
        <authorList>
            <person name="Ding F."/>
            <person name="Tang P."/>
            <person name="Hsu M.-H."/>
            <person name="Cui P."/>
            <person name="Hu S."/>
            <person name="Yu J."/>
            <person name="Chiu C.-H."/>
        </authorList>
    </citation>
    <scope>NUCLEOTIDE SEQUENCE [LARGE SCALE GENOMIC DNA]</scope>
    <source>
        <strain>CGSP14</strain>
    </source>
</reference>
<accession>B2IP53</accession>
<comment type="function">
    <text evidence="1">Catalyzes the phosphorylation of D-fructose 6-phosphate to fructose 1,6-bisphosphate by ATP, the first committing step of glycolysis.</text>
</comment>
<comment type="catalytic activity">
    <reaction evidence="1">
        <text>beta-D-fructose 6-phosphate + ATP = beta-D-fructose 1,6-bisphosphate + ADP + H(+)</text>
        <dbReference type="Rhea" id="RHEA:16109"/>
        <dbReference type="ChEBI" id="CHEBI:15378"/>
        <dbReference type="ChEBI" id="CHEBI:30616"/>
        <dbReference type="ChEBI" id="CHEBI:32966"/>
        <dbReference type="ChEBI" id="CHEBI:57634"/>
        <dbReference type="ChEBI" id="CHEBI:456216"/>
        <dbReference type="EC" id="2.7.1.11"/>
    </reaction>
</comment>
<comment type="cofactor">
    <cofactor evidence="1">
        <name>Mg(2+)</name>
        <dbReference type="ChEBI" id="CHEBI:18420"/>
    </cofactor>
</comment>
<comment type="activity regulation">
    <text evidence="1">Allosterically activated by ADP and other diphosphonucleosides, and allosterically inhibited by phosphoenolpyruvate.</text>
</comment>
<comment type="pathway">
    <text evidence="1">Carbohydrate degradation; glycolysis; D-glyceraldehyde 3-phosphate and glycerone phosphate from D-glucose: step 3/4.</text>
</comment>
<comment type="subunit">
    <text evidence="1">Homotetramer.</text>
</comment>
<comment type="subcellular location">
    <subcellularLocation>
        <location evidence="1">Cytoplasm</location>
    </subcellularLocation>
</comment>
<comment type="similarity">
    <text evidence="1">Belongs to the phosphofructokinase type A (PFKA) family. ATP-dependent PFK group I subfamily. Prokaryotic clade 'B1' sub-subfamily.</text>
</comment>
<evidence type="ECO:0000255" key="1">
    <source>
        <dbReference type="HAMAP-Rule" id="MF_00339"/>
    </source>
</evidence>